<dbReference type="EC" id="7.1.1.2" evidence="1"/>
<dbReference type="EMBL" id="AY684273">
    <property type="protein sequence ID" value="AAU89107.1"/>
    <property type="molecule type" value="Genomic_DNA"/>
</dbReference>
<dbReference type="SMR" id="Q5Y4Q9"/>
<dbReference type="Proteomes" id="UP000694520">
    <property type="component" value="Unplaced"/>
</dbReference>
<dbReference type="GO" id="GO:0005743">
    <property type="term" value="C:mitochondrial inner membrane"/>
    <property type="evidence" value="ECO:0000250"/>
    <property type="project" value="UniProtKB"/>
</dbReference>
<dbReference type="GO" id="GO:0008137">
    <property type="term" value="F:NADH dehydrogenase (ubiquinone) activity"/>
    <property type="evidence" value="ECO:0000250"/>
    <property type="project" value="UniProtKB"/>
</dbReference>
<dbReference type="GO" id="GO:0006120">
    <property type="term" value="P:mitochondrial electron transport, NADH to ubiquinone"/>
    <property type="evidence" value="ECO:0000250"/>
    <property type="project" value="UniProtKB"/>
</dbReference>
<dbReference type="GO" id="GO:0032981">
    <property type="term" value="P:mitochondrial respiratory chain complex I assembly"/>
    <property type="evidence" value="ECO:0000250"/>
    <property type="project" value="UniProtKB"/>
</dbReference>
<dbReference type="InterPro" id="IPR050175">
    <property type="entry name" value="Complex_I_Subunit_2"/>
</dbReference>
<dbReference type="InterPro" id="IPR010933">
    <property type="entry name" value="NADH_DH_su2_C"/>
</dbReference>
<dbReference type="InterPro" id="IPR003917">
    <property type="entry name" value="NADH_UbQ_OxRdtase_chain2"/>
</dbReference>
<dbReference type="InterPro" id="IPR001750">
    <property type="entry name" value="ND/Mrp_TM"/>
</dbReference>
<dbReference type="PANTHER" id="PTHR46552">
    <property type="entry name" value="NADH-UBIQUINONE OXIDOREDUCTASE CHAIN 2"/>
    <property type="match status" value="1"/>
</dbReference>
<dbReference type="PANTHER" id="PTHR46552:SF1">
    <property type="entry name" value="NADH-UBIQUINONE OXIDOREDUCTASE CHAIN 2"/>
    <property type="match status" value="1"/>
</dbReference>
<dbReference type="Pfam" id="PF06444">
    <property type="entry name" value="NADH_dehy_S2_C"/>
    <property type="match status" value="1"/>
</dbReference>
<dbReference type="Pfam" id="PF00361">
    <property type="entry name" value="Proton_antipo_M"/>
    <property type="match status" value="1"/>
</dbReference>
<dbReference type="PRINTS" id="PR01436">
    <property type="entry name" value="NADHDHGNASE2"/>
</dbReference>
<comment type="function">
    <text evidence="1">Core subunit of the mitochondrial membrane respiratory chain NADH dehydrogenase (Complex I) which catalyzes electron transfer from NADH through the respiratory chain, using ubiquinone as an electron acceptor. Essential for the catalytic activity and assembly of complex I.</text>
</comment>
<comment type="catalytic activity">
    <reaction evidence="1">
        <text>a ubiquinone + NADH + 5 H(+)(in) = a ubiquinol + NAD(+) + 4 H(+)(out)</text>
        <dbReference type="Rhea" id="RHEA:29091"/>
        <dbReference type="Rhea" id="RHEA-COMP:9565"/>
        <dbReference type="Rhea" id="RHEA-COMP:9566"/>
        <dbReference type="ChEBI" id="CHEBI:15378"/>
        <dbReference type="ChEBI" id="CHEBI:16389"/>
        <dbReference type="ChEBI" id="CHEBI:17976"/>
        <dbReference type="ChEBI" id="CHEBI:57540"/>
        <dbReference type="ChEBI" id="CHEBI:57945"/>
        <dbReference type="EC" id="7.1.1.2"/>
    </reaction>
</comment>
<comment type="subunit">
    <text evidence="1 2">Core subunit of respiratory chain NADH dehydrogenase (Complex I) which is composed of 45 different subunits. Interacts with TMEM242 (By similarity).</text>
</comment>
<comment type="subcellular location">
    <subcellularLocation>
        <location evidence="2">Mitochondrion inner membrane</location>
        <topology evidence="3">Multi-pass membrane protein</topology>
    </subcellularLocation>
</comment>
<comment type="similarity">
    <text evidence="4">Belongs to the complex I subunit 2 family.</text>
</comment>
<gene>
    <name evidence="1" type="primary">MT-ND2</name>
    <name type="synonym">MTND2</name>
    <name type="synonym">NADH2</name>
    <name type="synonym">ND2</name>
</gene>
<feature type="chain" id="PRO_0000253517" description="NADH-ubiquinone oxidoreductase chain 2">
    <location>
        <begin position="1"/>
        <end position="346"/>
    </location>
</feature>
<feature type="transmembrane region" description="Helical" evidence="3">
    <location>
        <begin position="3"/>
        <end position="23"/>
    </location>
</feature>
<feature type="transmembrane region" description="Helical" evidence="3">
    <location>
        <begin position="25"/>
        <end position="45"/>
    </location>
</feature>
<feature type="transmembrane region" description="Helical" evidence="3">
    <location>
        <begin position="67"/>
        <end position="87"/>
    </location>
</feature>
<feature type="transmembrane region" description="Helical" evidence="3">
    <location>
        <begin position="96"/>
        <end position="116"/>
    </location>
</feature>
<feature type="transmembrane region" description="Helical" evidence="3">
    <location>
        <begin position="122"/>
        <end position="142"/>
    </location>
</feature>
<feature type="transmembrane region" description="Helical" evidence="3">
    <location>
        <begin position="145"/>
        <end position="165"/>
    </location>
</feature>
<feature type="transmembrane region" description="Helical" evidence="3">
    <location>
        <begin position="200"/>
        <end position="220"/>
    </location>
</feature>
<feature type="transmembrane region" description="Helical" evidence="3">
    <location>
        <begin position="238"/>
        <end position="258"/>
    </location>
</feature>
<feature type="transmembrane region" description="Helical" evidence="3">
    <location>
        <begin position="273"/>
        <end position="293"/>
    </location>
</feature>
<feature type="transmembrane region" description="Helical" evidence="3">
    <location>
        <begin position="324"/>
        <end position="344"/>
    </location>
</feature>
<proteinExistence type="inferred from homology"/>
<keyword id="KW-0249">Electron transport</keyword>
<keyword id="KW-0472">Membrane</keyword>
<keyword id="KW-0496">Mitochondrion</keyword>
<keyword id="KW-0999">Mitochondrion inner membrane</keyword>
<keyword id="KW-0520">NAD</keyword>
<keyword id="KW-1185">Reference proteome</keyword>
<keyword id="KW-0679">Respiratory chain</keyword>
<keyword id="KW-1278">Translocase</keyword>
<keyword id="KW-0812">Transmembrane</keyword>
<keyword id="KW-1133">Transmembrane helix</keyword>
<keyword id="KW-0813">Transport</keyword>
<keyword id="KW-0830">Ubiquinone</keyword>
<sequence length="346" mass="39134">MNPIIFTTILLTIMLGTNNVMISSHWLLVWIGFEMNMLAIIPIMMKNHNPRATEASTKYFLTQSTASMLLMMAVIINLMFSGQWTVMKLFNPMASMLMTMALAMKLGMAPFHFWVPEVTQGIPLSSGLILLTWQKLAPMSVLYQIFPSINLNLILTLSILSILIGGWGGLNQTQLRKIMAYSSIAHMGWMTASLHTPYYTLLNLIIYITMTSTMFTMFMANSTTTTLSLSHTWNKTPIMTILILATLLSMGGLPPLSGFMPKWMIIQEMTKNNSIILPTFMAITALLNLYFYMRLTYSTALTMFPSTNNMKMKWQFPLMKKMTFLPTMVVLSTMTLPLTPMLSVLE</sequence>
<reference key="1">
    <citation type="submission" date="2004-10" db="EMBL/GenBank/DDBJ databases">
        <title>Complete sequence of the Yak (Bos grunniens.) mitochondrial genome and its genetic relationship with related species.</title>
        <authorList>
            <person name="Gu Z."/>
            <person name="Zhao X."/>
            <person name="Li N."/>
            <person name="Wu C."/>
        </authorList>
    </citation>
    <scope>NUCLEOTIDE SEQUENCE [GENOMIC DNA]</scope>
</reference>
<accession>Q5Y4Q9</accession>
<evidence type="ECO:0000250" key="1">
    <source>
        <dbReference type="UniProtKB" id="P03891"/>
    </source>
</evidence>
<evidence type="ECO:0000250" key="2">
    <source>
        <dbReference type="UniProtKB" id="P03892"/>
    </source>
</evidence>
<evidence type="ECO:0000255" key="3"/>
<evidence type="ECO:0000305" key="4"/>
<name>NU2M_BOSMU</name>
<organism>
    <name type="scientific">Bos mutus grunniens</name>
    <name type="common">Wild yak</name>
    <name type="synonym">Bos grunniens</name>
    <dbReference type="NCBI Taxonomy" id="30521"/>
    <lineage>
        <taxon>Eukaryota</taxon>
        <taxon>Metazoa</taxon>
        <taxon>Chordata</taxon>
        <taxon>Craniata</taxon>
        <taxon>Vertebrata</taxon>
        <taxon>Euteleostomi</taxon>
        <taxon>Mammalia</taxon>
        <taxon>Eutheria</taxon>
        <taxon>Laurasiatheria</taxon>
        <taxon>Artiodactyla</taxon>
        <taxon>Ruminantia</taxon>
        <taxon>Pecora</taxon>
        <taxon>Bovidae</taxon>
        <taxon>Bovinae</taxon>
        <taxon>Bos</taxon>
    </lineage>
</organism>
<protein>
    <recommendedName>
        <fullName evidence="1">NADH-ubiquinone oxidoreductase chain 2</fullName>
        <ecNumber evidence="1">7.1.1.2</ecNumber>
    </recommendedName>
    <alternativeName>
        <fullName>NADH dehydrogenase subunit 2</fullName>
    </alternativeName>
</protein>
<geneLocation type="mitochondrion"/>